<reference key="1">
    <citation type="journal article" date="2005" name="Science">
        <title>The transcriptional landscape of the mammalian genome.</title>
        <authorList>
            <person name="Carninci P."/>
            <person name="Kasukawa T."/>
            <person name="Katayama S."/>
            <person name="Gough J."/>
            <person name="Frith M.C."/>
            <person name="Maeda N."/>
            <person name="Oyama R."/>
            <person name="Ravasi T."/>
            <person name="Lenhard B."/>
            <person name="Wells C."/>
            <person name="Kodzius R."/>
            <person name="Shimokawa K."/>
            <person name="Bajic V.B."/>
            <person name="Brenner S.E."/>
            <person name="Batalov S."/>
            <person name="Forrest A.R."/>
            <person name="Zavolan M."/>
            <person name="Davis M.J."/>
            <person name="Wilming L.G."/>
            <person name="Aidinis V."/>
            <person name="Allen J.E."/>
            <person name="Ambesi-Impiombato A."/>
            <person name="Apweiler R."/>
            <person name="Aturaliya R.N."/>
            <person name="Bailey T.L."/>
            <person name="Bansal M."/>
            <person name="Baxter L."/>
            <person name="Beisel K.W."/>
            <person name="Bersano T."/>
            <person name="Bono H."/>
            <person name="Chalk A.M."/>
            <person name="Chiu K.P."/>
            <person name="Choudhary V."/>
            <person name="Christoffels A."/>
            <person name="Clutterbuck D.R."/>
            <person name="Crowe M.L."/>
            <person name="Dalla E."/>
            <person name="Dalrymple B.P."/>
            <person name="de Bono B."/>
            <person name="Della Gatta G."/>
            <person name="di Bernardo D."/>
            <person name="Down T."/>
            <person name="Engstrom P."/>
            <person name="Fagiolini M."/>
            <person name="Faulkner G."/>
            <person name="Fletcher C.F."/>
            <person name="Fukushima T."/>
            <person name="Furuno M."/>
            <person name="Futaki S."/>
            <person name="Gariboldi M."/>
            <person name="Georgii-Hemming P."/>
            <person name="Gingeras T.R."/>
            <person name="Gojobori T."/>
            <person name="Green R.E."/>
            <person name="Gustincich S."/>
            <person name="Harbers M."/>
            <person name="Hayashi Y."/>
            <person name="Hensch T.K."/>
            <person name="Hirokawa N."/>
            <person name="Hill D."/>
            <person name="Huminiecki L."/>
            <person name="Iacono M."/>
            <person name="Ikeo K."/>
            <person name="Iwama A."/>
            <person name="Ishikawa T."/>
            <person name="Jakt M."/>
            <person name="Kanapin A."/>
            <person name="Katoh M."/>
            <person name="Kawasawa Y."/>
            <person name="Kelso J."/>
            <person name="Kitamura H."/>
            <person name="Kitano H."/>
            <person name="Kollias G."/>
            <person name="Krishnan S.P."/>
            <person name="Kruger A."/>
            <person name="Kummerfeld S.K."/>
            <person name="Kurochkin I.V."/>
            <person name="Lareau L.F."/>
            <person name="Lazarevic D."/>
            <person name="Lipovich L."/>
            <person name="Liu J."/>
            <person name="Liuni S."/>
            <person name="McWilliam S."/>
            <person name="Madan Babu M."/>
            <person name="Madera M."/>
            <person name="Marchionni L."/>
            <person name="Matsuda H."/>
            <person name="Matsuzawa S."/>
            <person name="Miki H."/>
            <person name="Mignone F."/>
            <person name="Miyake S."/>
            <person name="Morris K."/>
            <person name="Mottagui-Tabar S."/>
            <person name="Mulder N."/>
            <person name="Nakano N."/>
            <person name="Nakauchi H."/>
            <person name="Ng P."/>
            <person name="Nilsson R."/>
            <person name="Nishiguchi S."/>
            <person name="Nishikawa S."/>
            <person name="Nori F."/>
            <person name="Ohara O."/>
            <person name="Okazaki Y."/>
            <person name="Orlando V."/>
            <person name="Pang K.C."/>
            <person name="Pavan W.J."/>
            <person name="Pavesi G."/>
            <person name="Pesole G."/>
            <person name="Petrovsky N."/>
            <person name="Piazza S."/>
            <person name="Reed J."/>
            <person name="Reid J.F."/>
            <person name="Ring B.Z."/>
            <person name="Ringwald M."/>
            <person name="Rost B."/>
            <person name="Ruan Y."/>
            <person name="Salzberg S.L."/>
            <person name="Sandelin A."/>
            <person name="Schneider C."/>
            <person name="Schoenbach C."/>
            <person name="Sekiguchi K."/>
            <person name="Semple C.A."/>
            <person name="Seno S."/>
            <person name="Sessa L."/>
            <person name="Sheng Y."/>
            <person name="Shibata Y."/>
            <person name="Shimada H."/>
            <person name="Shimada K."/>
            <person name="Silva D."/>
            <person name="Sinclair B."/>
            <person name="Sperling S."/>
            <person name="Stupka E."/>
            <person name="Sugiura K."/>
            <person name="Sultana R."/>
            <person name="Takenaka Y."/>
            <person name="Taki K."/>
            <person name="Tammoja K."/>
            <person name="Tan S.L."/>
            <person name="Tang S."/>
            <person name="Taylor M.S."/>
            <person name="Tegner J."/>
            <person name="Teichmann S.A."/>
            <person name="Ueda H.R."/>
            <person name="van Nimwegen E."/>
            <person name="Verardo R."/>
            <person name="Wei C.L."/>
            <person name="Yagi K."/>
            <person name="Yamanishi H."/>
            <person name="Zabarovsky E."/>
            <person name="Zhu S."/>
            <person name="Zimmer A."/>
            <person name="Hide W."/>
            <person name="Bult C."/>
            <person name="Grimmond S.M."/>
            <person name="Teasdale R.D."/>
            <person name="Liu E.T."/>
            <person name="Brusic V."/>
            <person name="Quackenbush J."/>
            <person name="Wahlestedt C."/>
            <person name="Mattick J.S."/>
            <person name="Hume D.A."/>
            <person name="Kai C."/>
            <person name="Sasaki D."/>
            <person name="Tomaru Y."/>
            <person name="Fukuda S."/>
            <person name="Kanamori-Katayama M."/>
            <person name="Suzuki M."/>
            <person name="Aoki J."/>
            <person name="Arakawa T."/>
            <person name="Iida J."/>
            <person name="Imamura K."/>
            <person name="Itoh M."/>
            <person name="Kato T."/>
            <person name="Kawaji H."/>
            <person name="Kawagashira N."/>
            <person name="Kawashima T."/>
            <person name="Kojima M."/>
            <person name="Kondo S."/>
            <person name="Konno H."/>
            <person name="Nakano K."/>
            <person name="Ninomiya N."/>
            <person name="Nishio T."/>
            <person name="Okada M."/>
            <person name="Plessy C."/>
            <person name="Shibata K."/>
            <person name="Shiraki T."/>
            <person name="Suzuki S."/>
            <person name="Tagami M."/>
            <person name="Waki K."/>
            <person name="Watahiki A."/>
            <person name="Okamura-Oho Y."/>
            <person name="Suzuki H."/>
            <person name="Kawai J."/>
            <person name="Hayashizaki Y."/>
        </authorList>
    </citation>
    <scope>NUCLEOTIDE SEQUENCE [LARGE SCALE MRNA]</scope>
    <source>
        <strain>C57BL/6J</strain>
        <tissue>Amnion</tissue>
        <tissue>Bone marrow</tissue>
        <tissue>Cerebellum</tissue>
        <tissue>Embryo</tissue>
        <tissue>Liver</tissue>
        <tissue>Placenta</tissue>
    </source>
</reference>
<reference key="2">
    <citation type="journal article" date="2004" name="Genome Res.">
        <title>The status, quality, and expansion of the NIH full-length cDNA project: the Mammalian Gene Collection (MGC).</title>
        <authorList>
            <consortium name="The MGC Project Team"/>
        </authorList>
    </citation>
    <scope>NUCLEOTIDE SEQUENCE [LARGE SCALE MRNA]</scope>
    <source>
        <tissue>Mammary tumor</tissue>
    </source>
</reference>
<reference key="3">
    <citation type="journal article" date="2010" name="Cell">
        <title>A tissue-specific atlas of mouse protein phosphorylation and expression.</title>
        <authorList>
            <person name="Huttlin E.L."/>
            <person name="Jedrychowski M.P."/>
            <person name="Elias J.E."/>
            <person name="Goswami T."/>
            <person name="Rad R."/>
            <person name="Beausoleil S.A."/>
            <person name="Villen J."/>
            <person name="Haas W."/>
            <person name="Sowa M.E."/>
            <person name="Gygi S.P."/>
        </authorList>
    </citation>
    <scope>IDENTIFICATION BY MASS SPECTROMETRY [LARGE SCALE ANALYSIS]</scope>
    <source>
        <tissue>Brain</tissue>
        <tissue>Liver</tissue>
    </source>
</reference>
<proteinExistence type="evidence at protein level"/>
<gene>
    <name type="primary">Msmo1</name>
    <name type="synonym">Sc4mol</name>
</gene>
<evidence type="ECO:0000250" key="1">
    <source>
        <dbReference type="UniProtKB" id="O35532"/>
    </source>
</evidence>
<evidence type="ECO:0000250" key="2">
    <source>
        <dbReference type="UniProtKB" id="Q15800"/>
    </source>
</evidence>
<evidence type="ECO:0000255" key="3"/>
<evidence type="ECO:0000305" key="4"/>
<protein>
    <recommendedName>
        <fullName>Methylsterol monooxygenase 1</fullName>
        <ecNumber evidence="1">1.14.18.9</ecNumber>
    </recommendedName>
    <alternativeName>
        <fullName>C-4 methylsterol oxidase</fullName>
    </alternativeName>
    <alternativeName>
        <fullName>Sterol-C4-methyl oxidase</fullName>
    </alternativeName>
</protein>
<feature type="chain" id="PRO_0000117034" description="Methylsterol monooxygenase 1">
    <location>
        <begin position="1"/>
        <end position="293"/>
    </location>
</feature>
<feature type="transmembrane region" description="Helical" evidence="3">
    <location>
        <begin position="55"/>
        <end position="75"/>
    </location>
</feature>
<feature type="transmembrane region" description="Helical" evidence="3">
    <location>
        <begin position="100"/>
        <end position="120"/>
    </location>
</feature>
<feature type="transmembrane region" description="Helical" evidence="3">
    <location>
        <begin position="199"/>
        <end position="219"/>
    </location>
</feature>
<feature type="domain" description="Fatty acid hydroxylase" evidence="3">
    <location>
        <begin position="144"/>
        <end position="274"/>
    </location>
</feature>
<feature type="short sequence motif" description="Histidine box-1">
    <location>
        <begin position="157"/>
        <end position="161"/>
    </location>
</feature>
<feature type="short sequence motif" description="Histidine box-2">
    <location>
        <begin position="170"/>
        <end position="174"/>
    </location>
</feature>
<feature type="short sequence motif" description="Histidine box-3">
    <location>
        <begin position="249"/>
        <end position="255"/>
    </location>
</feature>
<dbReference type="EC" id="1.14.18.9" evidence="1"/>
<dbReference type="EMBL" id="AK005090">
    <property type="protein sequence ID" value="BAB23811.1"/>
    <property type="molecule type" value="mRNA"/>
</dbReference>
<dbReference type="EMBL" id="AK005441">
    <property type="protein sequence ID" value="BAB24035.1"/>
    <property type="molecule type" value="mRNA"/>
</dbReference>
<dbReference type="EMBL" id="AK045059">
    <property type="protein sequence ID" value="BAC32201.1"/>
    <property type="molecule type" value="mRNA"/>
</dbReference>
<dbReference type="EMBL" id="AK146684">
    <property type="protein sequence ID" value="BAE27358.1"/>
    <property type="molecule type" value="mRNA"/>
</dbReference>
<dbReference type="EMBL" id="AK151135">
    <property type="protein sequence ID" value="BAE30143.1"/>
    <property type="molecule type" value="mRNA"/>
</dbReference>
<dbReference type="EMBL" id="AK169017">
    <property type="protein sequence ID" value="BAE40814.1"/>
    <property type="molecule type" value="mRNA"/>
</dbReference>
<dbReference type="EMBL" id="BC006802">
    <property type="protein sequence ID" value="AAH06802.1"/>
    <property type="molecule type" value="mRNA"/>
</dbReference>
<dbReference type="CCDS" id="CCDS22328.1"/>
<dbReference type="RefSeq" id="NP_079712.1">
    <property type="nucleotide sequence ID" value="NM_025436.3"/>
</dbReference>
<dbReference type="RefSeq" id="XP_036010125.1">
    <property type="nucleotide sequence ID" value="XM_036154232.1"/>
</dbReference>
<dbReference type="SMR" id="Q9CRA4"/>
<dbReference type="BioGRID" id="211315">
    <property type="interactions" value="3"/>
</dbReference>
<dbReference type="FunCoup" id="Q9CRA4">
    <property type="interactions" value="360"/>
</dbReference>
<dbReference type="STRING" id="10090.ENSMUSP00000034015"/>
<dbReference type="iPTMnet" id="Q9CRA4"/>
<dbReference type="PhosphoSitePlus" id="Q9CRA4"/>
<dbReference type="SwissPalm" id="Q9CRA4"/>
<dbReference type="jPOST" id="Q9CRA4"/>
<dbReference type="PaxDb" id="10090-ENSMUSP00000034015"/>
<dbReference type="PeptideAtlas" id="Q9CRA4"/>
<dbReference type="ProteomicsDB" id="290101"/>
<dbReference type="Pumba" id="Q9CRA4"/>
<dbReference type="Antibodypedia" id="28315">
    <property type="antibodies" value="128 antibodies from 20 providers"/>
</dbReference>
<dbReference type="DNASU" id="66234"/>
<dbReference type="Ensembl" id="ENSMUST00000034015.11">
    <property type="protein sequence ID" value="ENSMUSP00000034015.5"/>
    <property type="gene ID" value="ENSMUSG00000031604.11"/>
</dbReference>
<dbReference type="GeneID" id="66234"/>
<dbReference type="KEGG" id="mmu:66234"/>
<dbReference type="UCSC" id="uc009lux.1">
    <property type="organism name" value="mouse"/>
</dbReference>
<dbReference type="AGR" id="MGI:1913484"/>
<dbReference type="CTD" id="6307"/>
<dbReference type="MGI" id="MGI:1913484">
    <property type="gene designation" value="Msmo1"/>
</dbReference>
<dbReference type="VEuPathDB" id="HostDB:ENSMUSG00000031604"/>
<dbReference type="eggNOG" id="KOG0873">
    <property type="taxonomic scope" value="Eukaryota"/>
</dbReference>
<dbReference type="GeneTree" id="ENSGT00940000158012"/>
<dbReference type="HOGENOM" id="CLU_047036_5_2_1"/>
<dbReference type="InParanoid" id="Q9CRA4"/>
<dbReference type="OMA" id="IVHEFIY"/>
<dbReference type="OrthoDB" id="1658724at2759"/>
<dbReference type="PhylomeDB" id="Q9CRA4"/>
<dbReference type="TreeFam" id="TF354294"/>
<dbReference type="Reactome" id="R-MMU-191273">
    <property type="pathway name" value="Cholesterol biosynthesis"/>
</dbReference>
<dbReference type="UniPathway" id="UPA00063"/>
<dbReference type="UniPathway" id="UPA00770">
    <property type="reaction ID" value="UER00756"/>
</dbReference>
<dbReference type="BioGRID-ORCS" id="66234">
    <property type="hits" value="9 hits in 79 CRISPR screens"/>
</dbReference>
<dbReference type="ChiTaRS" id="Msmo1">
    <property type="organism name" value="mouse"/>
</dbReference>
<dbReference type="PRO" id="PR:Q9CRA4"/>
<dbReference type="Proteomes" id="UP000000589">
    <property type="component" value="Chromosome 8"/>
</dbReference>
<dbReference type="RNAct" id="Q9CRA4">
    <property type="molecule type" value="protein"/>
</dbReference>
<dbReference type="Bgee" id="ENSMUSG00000031604">
    <property type="expression patterns" value="Expressed in tail skin and 285 other cell types or tissues"/>
</dbReference>
<dbReference type="ExpressionAtlas" id="Q9CRA4">
    <property type="expression patterns" value="baseline and differential"/>
</dbReference>
<dbReference type="GO" id="GO:0005789">
    <property type="term" value="C:endoplasmic reticulum membrane"/>
    <property type="evidence" value="ECO:0007669"/>
    <property type="project" value="UniProtKB-SubCell"/>
</dbReference>
<dbReference type="GO" id="GO:0000254">
    <property type="term" value="F:C-4 methylsterol oxidase activity"/>
    <property type="evidence" value="ECO:0007669"/>
    <property type="project" value="UniProtKB-EC"/>
</dbReference>
<dbReference type="GO" id="GO:0005506">
    <property type="term" value="F:iron ion binding"/>
    <property type="evidence" value="ECO:0007669"/>
    <property type="project" value="InterPro"/>
</dbReference>
<dbReference type="GO" id="GO:0006695">
    <property type="term" value="P:cholesterol biosynthetic process"/>
    <property type="evidence" value="ECO:0007669"/>
    <property type="project" value="UniProtKB-UniPathway"/>
</dbReference>
<dbReference type="InterPro" id="IPR006694">
    <property type="entry name" value="Fatty_acid_hydroxylase"/>
</dbReference>
<dbReference type="InterPro" id="IPR050307">
    <property type="entry name" value="Sterol_Desaturase_Related"/>
</dbReference>
<dbReference type="PANTHER" id="PTHR11863">
    <property type="entry name" value="STEROL DESATURASE"/>
    <property type="match status" value="1"/>
</dbReference>
<dbReference type="Pfam" id="PF04116">
    <property type="entry name" value="FA_hydroxylase"/>
    <property type="match status" value="1"/>
</dbReference>
<keyword id="KW-0152">Cholesterol biosynthesis</keyword>
<keyword id="KW-0153">Cholesterol metabolism</keyword>
<keyword id="KW-0256">Endoplasmic reticulum</keyword>
<keyword id="KW-0408">Iron</keyword>
<keyword id="KW-0444">Lipid biosynthesis</keyword>
<keyword id="KW-0443">Lipid metabolism</keyword>
<keyword id="KW-0472">Membrane</keyword>
<keyword id="KW-0520">NAD</keyword>
<keyword id="KW-0560">Oxidoreductase</keyword>
<keyword id="KW-1185">Reference proteome</keyword>
<keyword id="KW-0752">Steroid biosynthesis</keyword>
<keyword id="KW-0753">Steroid metabolism</keyword>
<keyword id="KW-0756">Sterol biosynthesis</keyword>
<keyword id="KW-1207">Sterol metabolism</keyword>
<keyword id="KW-0812">Transmembrane</keyword>
<keyword id="KW-1133">Transmembrane helix</keyword>
<keyword id="KW-0832">Ubl conjugation</keyword>
<name>MSMO1_MOUSE</name>
<accession>Q9CRA4</accession>
<accession>Q543V8</accession>
<comment type="function">
    <text evidence="2">Catalyzes the three-step monooxygenation required for the demethylation of 4,4-dimethyl and 4alpha-methylsterols, which can be subsequently metabolized to cholesterol.</text>
</comment>
<comment type="catalytic activity">
    <reaction evidence="1">
        <text>4,4-dimethyl-5alpha-cholest-7-en-3beta-ol + 6 Fe(II)-[cytochrome b5] + 3 O2 + 5 H(+) = 4alpha-carboxy-4beta-methyl-5alpha-cholest-7-ene-3beta-ol + 6 Fe(III)-[cytochrome b5] + 4 H2O</text>
        <dbReference type="Rhea" id="RHEA:55220"/>
        <dbReference type="Rhea" id="RHEA-COMP:10438"/>
        <dbReference type="Rhea" id="RHEA-COMP:10439"/>
        <dbReference type="ChEBI" id="CHEBI:15377"/>
        <dbReference type="ChEBI" id="CHEBI:15378"/>
        <dbReference type="ChEBI" id="CHEBI:15379"/>
        <dbReference type="ChEBI" id="CHEBI:16455"/>
        <dbReference type="ChEBI" id="CHEBI:29033"/>
        <dbReference type="ChEBI" id="CHEBI:29034"/>
        <dbReference type="ChEBI" id="CHEBI:58387"/>
        <dbReference type="EC" id="1.14.18.9"/>
    </reaction>
    <physiologicalReaction direction="left-to-right" evidence="1">
        <dbReference type="Rhea" id="RHEA:55221"/>
    </physiologicalReaction>
</comment>
<comment type="catalytic activity">
    <reaction evidence="2">
        <text>4,4-dimethyl-5alpha-cholesta-8,24-dien-3beta-ol + 6 Fe(II)-[cytochrome b5] + 3 O2 + 5 H(+) = 4beta-methylzymosterol-4alpha-carboxylate + 6 Fe(III)-[cytochrome b5] + 4 H2O</text>
        <dbReference type="Rhea" id="RHEA:55244"/>
        <dbReference type="Rhea" id="RHEA-COMP:10438"/>
        <dbReference type="Rhea" id="RHEA-COMP:10439"/>
        <dbReference type="ChEBI" id="CHEBI:15377"/>
        <dbReference type="ChEBI" id="CHEBI:15378"/>
        <dbReference type="ChEBI" id="CHEBI:15379"/>
        <dbReference type="ChEBI" id="CHEBI:18364"/>
        <dbReference type="ChEBI" id="CHEBI:29033"/>
        <dbReference type="ChEBI" id="CHEBI:29034"/>
        <dbReference type="ChEBI" id="CHEBI:64925"/>
    </reaction>
    <physiologicalReaction direction="left-to-right" evidence="2">
        <dbReference type="Rhea" id="RHEA:55245"/>
    </physiologicalReaction>
</comment>
<comment type="catalytic activity">
    <reaction evidence="2">
        <text>4alpha-methylzymosterol + 6 Fe(II)-[cytochrome b5] + 3 O2 + 5 H(+) = 4alpha-carboxyzymosterol + 6 Fe(III)-[cytochrome b5] + 4 H2O</text>
        <dbReference type="Rhea" id="RHEA:47056"/>
        <dbReference type="Rhea" id="RHEA-COMP:10438"/>
        <dbReference type="Rhea" id="RHEA-COMP:10439"/>
        <dbReference type="ChEBI" id="CHEBI:1949"/>
        <dbReference type="ChEBI" id="CHEBI:15377"/>
        <dbReference type="ChEBI" id="CHEBI:15378"/>
        <dbReference type="ChEBI" id="CHEBI:15379"/>
        <dbReference type="ChEBI" id="CHEBI:29033"/>
        <dbReference type="ChEBI" id="CHEBI:29034"/>
        <dbReference type="ChEBI" id="CHEBI:143575"/>
    </reaction>
    <physiologicalReaction direction="left-to-right" evidence="2">
        <dbReference type="Rhea" id="RHEA:47057"/>
    </physiologicalReaction>
</comment>
<comment type="catalytic activity">
    <reaction evidence="2">
        <text>4alpha-methyl-5alpha-cholest-7-en-3beta-ol + 6 Fe(II)-[cytochrome b5] + 3 O2 + 5 H(+) = 4alpha-carboxy-5alpha-cholest-7-en-3beta-ol + 6 Fe(III)-[cytochrome b5] + 4 H2O</text>
        <dbReference type="Rhea" id="RHEA:62768"/>
        <dbReference type="Rhea" id="RHEA-COMP:10438"/>
        <dbReference type="Rhea" id="RHEA-COMP:10439"/>
        <dbReference type="ChEBI" id="CHEBI:15377"/>
        <dbReference type="ChEBI" id="CHEBI:15378"/>
        <dbReference type="ChEBI" id="CHEBI:15379"/>
        <dbReference type="ChEBI" id="CHEBI:18378"/>
        <dbReference type="ChEBI" id="CHEBI:29033"/>
        <dbReference type="ChEBI" id="CHEBI:29034"/>
        <dbReference type="ChEBI" id="CHEBI:145943"/>
    </reaction>
    <physiologicalReaction direction="left-to-right" evidence="2">
        <dbReference type="Rhea" id="RHEA:62769"/>
    </physiologicalReaction>
</comment>
<comment type="catalytic activity">
    <reaction evidence="2">
        <text>4,4-dimethyl-5alpha-cholest-8-en-3beta-ol + 6 Fe(II)-[cytochrome b5] + 3 O2 + 5 H(+) = 4alpha-carboxy-4beta-methyl-5alpha-cholest-8-en-3beta-ol + 6 Fe(III)-[cytochrome b5] + 4 H2O</text>
        <dbReference type="Rhea" id="RHEA:62776"/>
        <dbReference type="Rhea" id="RHEA-COMP:10438"/>
        <dbReference type="Rhea" id="RHEA-COMP:10439"/>
        <dbReference type="ChEBI" id="CHEBI:15377"/>
        <dbReference type="ChEBI" id="CHEBI:15378"/>
        <dbReference type="ChEBI" id="CHEBI:15379"/>
        <dbReference type="ChEBI" id="CHEBI:29033"/>
        <dbReference type="ChEBI" id="CHEBI:29034"/>
        <dbReference type="ChEBI" id="CHEBI:87044"/>
        <dbReference type="ChEBI" id="CHEBI:87047"/>
    </reaction>
    <physiologicalReaction direction="left-to-right" evidence="2">
        <dbReference type="Rhea" id="RHEA:62777"/>
    </physiologicalReaction>
</comment>
<comment type="catalytic activity">
    <reaction evidence="2">
        <text>4alpha-methyl-5alpha-cholest-8-en-3beta-ol + 6 Fe(II)-[cytochrome b5] + 3 O2 + 5 H(+) = 4alpha-carboxy-5alpha-cholest-8-ene-3beta-ol + 6 Fe(III)-[cytochrome b5] + 4 H2O</text>
        <dbReference type="Rhea" id="RHEA:62780"/>
        <dbReference type="Rhea" id="RHEA-COMP:10438"/>
        <dbReference type="Rhea" id="RHEA-COMP:10439"/>
        <dbReference type="ChEBI" id="CHEBI:15377"/>
        <dbReference type="ChEBI" id="CHEBI:15378"/>
        <dbReference type="ChEBI" id="CHEBI:15379"/>
        <dbReference type="ChEBI" id="CHEBI:29033"/>
        <dbReference type="ChEBI" id="CHEBI:29034"/>
        <dbReference type="ChEBI" id="CHEBI:87051"/>
        <dbReference type="ChEBI" id="CHEBI:87055"/>
    </reaction>
    <physiologicalReaction direction="left-to-right" evidence="2">
        <dbReference type="Rhea" id="RHEA:62781"/>
    </physiologicalReaction>
</comment>
<comment type="cofactor">
    <cofactor evidence="2">
        <name>Fe cation</name>
        <dbReference type="ChEBI" id="CHEBI:24875"/>
    </cofactor>
</comment>
<comment type="pathway">
    <text evidence="2">Steroid biosynthesis; zymosterol biosynthesis; zymosterol from lanosterol: step 3/6.</text>
</comment>
<comment type="pathway">
    <text evidence="2">Steroid biosynthesis; cholesterol biosynthesis.</text>
</comment>
<comment type="subcellular location">
    <subcellularLocation>
        <location evidence="2">Endoplasmic reticulum membrane</location>
        <topology evidence="2">Multi-pass membrane protein</topology>
    </subcellularLocation>
</comment>
<comment type="domain">
    <text>The histidine box domains may contain the active site and/or be involved in metal ion binding.</text>
</comment>
<comment type="PTM">
    <text evidence="2">Ubiquitinated by MARCHF6, leading to proteasomal degradation.</text>
</comment>
<comment type="similarity">
    <text evidence="4">Belongs to the sterol desaturase family.</text>
</comment>
<sequence length="293" mass="34772">MATNKSVGVFSSASLAVEYVDSLLPENPLQEPFKNAWVYMLDNYTKFQIATWGSLIVHEAIYFLFSLPGFLFQFIPYMRKYKIQKDKPETFEGQWKCLKKILFNHFFIQLPLICGTYYFTEFFNIPYDWERMPRWYLTLARCLGCAVIEDTWHYFLHRLLHHKRIYKYIHKVHHEFQAPFGIEAEYAHPLETLILGTGFFIGIVLLCDHVILLWAWVTIRLLETIDVHSGYDIPLNPLNLVPFYTGARHHDFHHMNFIGNYASTFTWWDKLFGTDAQYHAYIEKSKKLGKKSD</sequence>
<organism>
    <name type="scientific">Mus musculus</name>
    <name type="common">Mouse</name>
    <dbReference type="NCBI Taxonomy" id="10090"/>
    <lineage>
        <taxon>Eukaryota</taxon>
        <taxon>Metazoa</taxon>
        <taxon>Chordata</taxon>
        <taxon>Craniata</taxon>
        <taxon>Vertebrata</taxon>
        <taxon>Euteleostomi</taxon>
        <taxon>Mammalia</taxon>
        <taxon>Eutheria</taxon>
        <taxon>Euarchontoglires</taxon>
        <taxon>Glires</taxon>
        <taxon>Rodentia</taxon>
        <taxon>Myomorpha</taxon>
        <taxon>Muroidea</taxon>
        <taxon>Muridae</taxon>
        <taxon>Murinae</taxon>
        <taxon>Mus</taxon>
        <taxon>Mus</taxon>
    </lineage>
</organism>